<proteinExistence type="inferred from homology"/>
<organism>
    <name type="scientific">Gloeobacter violaceus (strain ATCC 29082 / PCC 7421)</name>
    <dbReference type="NCBI Taxonomy" id="251221"/>
    <lineage>
        <taxon>Bacteria</taxon>
        <taxon>Bacillati</taxon>
        <taxon>Cyanobacteriota</taxon>
        <taxon>Cyanophyceae</taxon>
        <taxon>Gloeobacterales</taxon>
        <taxon>Gloeobacteraceae</taxon>
        <taxon>Gloeobacter</taxon>
    </lineage>
</organism>
<dbReference type="EC" id="4.2.1.96"/>
<dbReference type="EMBL" id="BA000045">
    <property type="protein sequence ID" value="BAC89586.1"/>
    <property type="molecule type" value="Genomic_DNA"/>
</dbReference>
<dbReference type="RefSeq" id="NP_924591.1">
    <property type="nucleotide sequence ID" value="NC_005125.1"/>
</dbReference>
<dbReference type="RefSeq" id="WP_011141644.1">
    <property type="nucleotide sequence ID" value="NC_005125.1"/>
</dbReference>
<dbReference type="SMR" id="Q7NK35"/>
<dbReference type="FunCoup" id="Q7NK35">
    <property type="interactions" value="79"/>
</dbReference>
<dbReference type="STRING" id="251221.gene:10759135"/>
<dbReference type="EnsemblBacteria" id="BAC89586">
    <property type="protein sequence ID" value="BAC89586"/>
    <property type="gene ID" value="BAC89586"/>
</dbReference>
<dbReference type="KEGG" id="gvi:gsl1645"/>
<dbReference type="PATRIC" id="fig|251221.4.peg.1680"/>
<dbReference type="eggNOG" id="COG2154">
    <property type="taxonomic scope" value="Bacteria"/>
</dbReference>
<dbReference type="HOGENOM" id="CLU_081974_4_0_3"/>
<dbReference type="InParanoid" id="Q7NK35"/>
<dbReference type="OrthoDB" id="9794987at2"/>
<dbReference type="PhylomeDB" id="Q7NK35"/>
<dbReference type="Proteomes" id="UP000000557">
    <property type="component" value="Chromosome"/>
</dbReference>
<dbReference type="GO" id="GO:0008124">
    <property type="term" value="F:4-alpha-hydroxytetrahydrobiopterin dehydratase activity"/>
    <property type="evidence" value="ECO:0000318"/>
    <property type="project" value="GO_Central"/>
</dbReference>
<dbReference type="GO" id="GO:0006729">
    <property type="term" value="P:tetrahydrobiopterin biosynthetic process"/>
    <property type="evidence" value="ECO:0007669"/>
    <property type="project" value="InterPro"/>
</dbReference>
<dbReference type="CDD" id="cd00488">
    <property type="entry name" value="PCD_DCoH"/>
    <property type="match status" value="1"/>
</dbReference>
<dbReference type="Gene3D" id="3.30.1360.20">
    <property type="entry name" value="Transcriptional coactivator/pterin dehydratase"/>
    <property type="match status" value="1"/>
</dbReference>
<dbReference type="HAMAP" id="MF_00434">
    <property type="entry name" value="Pterin_4_alpha"/>
    <property type="match status" value="1"/>
</dbReference>
<dbReference type="InterPro" id="IPR036428">
    <property type="entry name" value="PCD_sf"/>
</dbReference>
<dbReference type="InterPro" id="IPR001533">
    <property type="entry name" value="Pterin_deHydtase"/>
</dbReference>
<dbReference type="NCBIfam" id="NF002017">
    <property type="entry name" value="PRK00823.1-2"/>
    <property type="match status" value="1"/>
</dbReference>
<dbReference type="PANTHER" id="PTHR12599">
    <property type="entry name" value="PTERIN-4-ALPHA-CARBINOLAMINE DEHYDRATASE"/>
    <property type="match status" value="1"/>
</dbReference>
<dbReference type="PANTHER" id="PTHR12599:SF0">
    <property type="entry name" value="PTERIN-4-ALPHA-CARBINOLAMINE DEHYDRATASE"/>
    <property type="match status" value="1"/>
</dbReference>
<dbReference type="Pfam" id="PF01329">
    <property type="entry name" value="Pterin_4a"/>
    <property type="match status" value="1"/>
</dbReference>
<dbReference type="SUPFAM" id="SSF55248">
    <property type="entry name" value="PCD-like"/>
    <property type="match status" value="1"/>
</dbReference>
<sequence>MNKMTPEEIETALKPIADWQLSEADGATAIERVFRFDDFVQAIAFVNKVAERAETAGHHPDIHIHYNRVRLVLSTHDAGGVTSKDLEMAAAL</sequence>
<evidence type="ECO:0000305" key="1"/>
<feature type="chain" id="PRO_0000063082" description="Putative pterin-4-alpha-carbinolamine dehydratase 2">
    <location>
        <begin position="1"/>
        <end position="92"/>
    </location>
</feature>
<keyword id="KW-0456">Lyase</keyword>
<keyword id="KW-1185">Reference proteome</keyword>
<gene>
    <name type="ordered locus">gsl1645</name>
</gene>
<protein>
    <recommendedName>
        <fullName>Putative pterin-4-alpha-carbinolamine dehydratase 2</fullName>
        <shortName>PHS 2</shortName>
        <ecNumber>4.2.1.96</ecNumber>
    </recommendedName>
    <alternativeName>
        <fullName>4-alpha-hydroxy-tetrahydropterin dehydratase 2</fullName>
    </alternativeName>
    <alternativeName>
        <fullName>Pterin carbinolamine dehydratase 2</fullName>
        <shortName>PCD 2</shortName>
    </alternativeName>
</protein>
<accession>Q7NK35</accession>
<reference key="1">
    <citation type="journal article" date="2003" name="DNA Res.">
        <title>Complete genome structure of Gloeobacter violaceus PCC 7421, a cyanobacterium that lacks thylakoids.</title>
        <authorList>
            <person name="Nakamura Y."/>
            <person name="Kaneko T."/>
            <person name="Sato S."/>
            <person name="Mimuro M."/>
            <person name="Miyashita H."/>
            <person name="Tsuchiya T."/>
            <person name="Sasamoto S."/>
            <person name="Watanabe A."/>
            <person name="Kawashima K."/>
            <person name="Kishida Y."/>
            <person name="Kiyokawa C."/>
            <person name="Kohara M."/>
            <person name="Matsumoto M."/>
            <person name="Matsuno A."/>
            <person name="Nakazaki N."/>
            <person name="Shimpo S."/>
            <person name="Takeuchi C."/>
            <person name="Yamada M."/>
            <person name="Tabata S."/>
        </authorList>
    </citation>
    <scope>NUCLEOTIDE SEQUENCE [LARGE SCALE GENOMIC DNA]</scope>
    <source>
        <strain>ATCC 29082 / PCC 7421</strain>
    </source>
</reference>
<name>PHS2_GLOVI</name>
<comment type="catalytic activity">
    <reaction>
        <text>(4aS,6R)-4a-hydroxy-L-erythro-5,6,7,8-tetrahydrobiopterin = (6R)-L-erythro-6,7-dihydrobiopterin + H2O</text>
        <dbReference type="Rhea" id="RHEA:11920"/>
        <dbReference type="ChEBI" id="CHEBI:15377"/>
        <dbReference type="ChEBI" id="CHEBI:15642"/>
        <dbReference type="ChEBI" id="CHEBI:43120"/>
        <dbReference type="EC" id="4.2.1.96"/>
    </reaction>
</comment>
<comment type="similarity">
    <text evidence="1">Belongs to the pterin-4-alpha-carbinolamine dehydratase family.</text>
</comment>